<accession>B5FEW8</accession>
<sequence>MIYQGENLSVDYIEPGIAHLVFNAKGSVNKLNLATLQSVGEAIDALYSQKDLQGLLLSSDKSAFIVGADITEFLGLFDIPTEELSDWLHQANAIFNRLEDIPVPTLSAITGFALGGGCECVLATDFRLADETASIGLPETQLGIMPGWGGSVRLPRLIGADPAMEVITTGKPKRAKDALALGMIDGVVSRETLITDSVTMLKKAIGGQLDWQSRRTQKKAPLKLSPLEAAMSFNVAKGMIMKMAGKHYPAPMTAVKSIENSAFMDRDAALEVENKNFVALTQTDVAKSLVGIFLNDQLVKSKAKQAIKNSEPVTSAAVLGAGIMGGGIAYQSASKGVPVLMKDIAQQSLDLGMNEASKLLNKQLERGRLSGLKMAQVLSSITPSLNYASIENKDIVVEAVVENPKIKAAVLAEVENEVNEHAILASNTSTIPISLLAKSLKRPENFCGMHFFNPVHRMPLVEVIRGEKTSQQTIDRVVAYASQMGKTPIVVNDCPGFFVNRVLFPYFAGFSLLLRDGGDYQQIDKVMEKEFGWPMGPAYLLDVVGIDTAHHAQAVMAQGFPERMAKNGRDVIDAMFESDRYGQKNGSGFYAYSIDRKGKPKKNIDESTAGIIATVTNTTQPYTSEQISARMMIPMINEVIRCLDEGIIASPAEADMALVYGLGFPPFKGGVFRYLDAIGLTTYLDMAKEFEHLGAVYQVPESIKQKAADGECYYPAPQSLSAPSA</sequence>
<reference key="1">
    <citation type="submission" date="2008-08" db="EMBL/GenBank/DDBJ databases">
        <title>Complete sequence of Vibrio fischeri strain MJ11.</title>
        <authorList>
            <person name="Mandel M.J."/>
            <person name="Stabb E.V."/>
            <person name="Ruby E.G."/>
            <person name="Ferriera S."/>
            <person name="Johnson J."/>
            <person name="Kravitz S."/>
            <person name="Beeson K."/>
            <person name="Sutton G."/>
            <person name="Rogers Y.-H."/>
            <person name="Friedman R."/>
            <person name="Frazier M."/>
            <person name="Venter J.C."/>
        </authorList>
    </citation>
    <scope>NUCLEOTIDE SEQUENCE [LARGE SCALE GENOMIC DNA]</scope>
    <source>
        <strain>MJ11</strain>
    </source>
</reference>
<gene>
    <name evidence="1" type="primary">fadB</name>
    <name type="ordered locus">VFMJ11_0024</name>
</gene>
<keyword id="KW-0276">Fatty acid metabolism</keyword>
<keyword id="KW-0413">Isomerase</keyword>
<keyword id="KW-0442">Lipid degradation</keyword>
<keyword id="KW-0443">Lipid metabolism</keyword>
<keyword id="KW-0456">Lyase</keyword>
<keyword id="KW-0511">Multifunctional enzyme</keyword>
<keyword id="KW-0520">NAD</keyword>
<keyword id="KW-0560">Oxidoreductase</keyword>
<feature type="chain" id="PRO_1000186058" description="Fatty acid oxidation complex subunit alpha">
    <location>
        <begin position="1"/>
        <end position="725"/>
    </location>
</feature>
<feature type="region of interest" description="Enoyl-CoA hydratase/isomerase" evidence="1">
    <location>
        <begin position="1"/>
        <end position="189"/>
    </location>
</feature>
<feature type="region of interest" description="3-hydroxyacyl-CoA dehydrogenase" evidence="1">
    <location>
        <begin position="311"/>
        <end position="725"/>
    </location>
</feature>
<feature type="active site" description="For 3-hydroxyacyl-CoA dehydrogenase activity" evidence="1">
    <location>
        <position position="450"/>
    </location>
</feature>
<feature type="binding site" evidence="1">
    <location>
        <position position="296"/>
    </location>
    <ligand>
        <name>substrate</name>
    </ligand>
</feature>
<feature type="binding site" evidence="1">
    <location>
        <position position="324"/>
    </location>
    <ligand>
        <name>NAD(+)</name>
        <dbReference type="ChEBI" id="CHEBI:57540"/>
    </ligand>
</feature>
<feature type="binding site" evidence="1">
    <location>
        <position position="343"/>
    </location>
    <ligand>
        <name>NAD(+)</name>
        <dbReference type="ChEBI" id="CHEBI:57540"/>
    </ligand>
</feature>
<feature type="binding site" evidence="1">
    <location>
        <begin position="400"/>
        <end position="402"/>
    </location>
    <ligand>
        <name>NAD(+)</name>
        <dbReference type="ChEBI" id="CHEBI:57540"/>
    </ligand>
</feature>
<feature type="binding site" evidence="1">
    <location>
        <position position="407"/>
    </location>
    <ligand>
        <name>NAD(+)</name>
        <dbReference type="ChEBI" id="CHEBI:57540"/>
    </ligand>
</feature>
<feature type="binding site" evidence="1">
    <location>
        <position position="429"/>
    </location>
    <ligand>
        <name>NAD(+)</name>
        <dbReference type="ChEBI" id="CHEBI:57540"/>
    </ligand>
</feature>
<feature type="binding site" evidence="1">
    <location>
        <position position="453"/>
    </location>
    <ligand>
        <name>NAD(+)</name>
        <dbReference type="ChEBI" id="CHEBI:57540"/>
    </ligand>
</feature>
<feature type="binding site" evidence="1">
    <location>
        <position position="500"/>
    </location>
    <ligand>
        <name>substrate</name>
    </ligand>
</feature>
<feature type="binding site" evidence="1">
    <location>
        <position position="660"/>
    </location>
    <ligand>
        <name>substrate</name>
    </ligand>
</feature>
<feature type="site" description="Important for catalytic activity" evidence="1">
    <location>
        <position position="119"/>
    </location>
</feature>
<feature type="site" description="Important for catalytic activity" evidence="1">
    <location>
        <position position="139"/>
    </location>
</feature>
<dbReference type="EC" id="4.2.1.17" evidence="1"/>
<dbReference type="EC" id="5.1.2.3" evidence="1"/>
<dbReference type="EC" id="5.3.3.8" evidence="1"/>
<dbReference type="EC" id="1.1.1.35" evidence="1"/>
<dbReference type="EMBL" id="CP001139">
    <property type="protein sequence ID" value="ACH65088.1"/>
    <property type="molecule type" value="Genomic_DNA"/>
</dbReference>
<dbReference type="RefSeq" id="WP_012532817.1">
    <property type="nucleotide sequence ID" value="NC_011184.1"/>
</dbReference>
<dbReference type="SMR" id="B5FEW8"/>
<dbReference type="KEGG" id="vfm:VFMJ11_0024"/>
<dbReference type="HOGENOM" id="CLU_009834_16_3_6"/>
<dbReference type="UniPathway" id="UPA00659"/>
<dbReference type="Proteomes" id="UP000001857">
    <property type="component" value="Chromosome I"/>
</dbReference>
<dbReference type="GO" id="GO:0036125">
    <property type="term" value="C:fatty acid beta-oxidation multienzyme complex"/>
    <property type="evidence" value="ECO:0007669"/>
    <property type="project" value="InterPro"/>
</dbReference>
<dbReference type="GO" id="GO:0008692">
    <property type="term" value="F:3-hydroxybutyryl-CoA epimerase activity"/>
    <property type="evidence" value="ECO:0007669"/>
    <property type="project" value="UniProtKB-UniRule"/>
</dbReference>
<dbReference type="GO" id="GO:0004165">
    <property type="term" value="F:delta(3)-delta(2)-enoyl-CoA isomerase activity"/>
    <property type="evidence" value="ECO:0007669"/>
    <property type="project" value="UniProtKB-UniRule"/>
</dbReference>
<dbReference type="GO" id="GO:0004300">
    <property type="term" value="F:enoyl-CoA hydratase activity"/>
    <property type="evidence" value="ECO:0007669"/>
    <property type="project" value="UniProtKB-UniRule"/>
</dbReference>
<dbReference type="GO" id="GO:0016509">
    <property type="term" value="F:long-chain-3-hydroxyacyl-CoA dehydrogenase activity"/>
    <property type="evidence" value="ECO:0007669"/>
    <property type="project" value="TreeGrafter"/>
</dbReference>
<dbReference type="GO" id="GO:0070403">
    <property type="term" value="F:NAD+ binding"/>
    <property type="evidence" value="ECO:0007669"/>
    <property type="project" value="InterPro"/>
</dbReference>
<dbReference type="GO" id="GO:0006635">
    <property type="term" value="P:fatty acid beta-oxidation"/>
    <property type="evidence" value="ECO:0007669"/>
    <property type="project" value="UniProtKB-UniRule"/>
</dbReference>
<dbReference type="CDD" id="cd06558">
    <property type="entry name" value="crotonase-like"/>
    <property type="match status" value="1"/>
</dbReference>
<dbReference type="FunFam" id="3.40.50.720:FF:000009">
    <property type="entry name" value="Fatty oxidation complex, alpha subunit"/>
    <property type="match status" value="1"/>
</dbReference>
<dbReference type="Gene3D" id="1.10.1040.50">
    <property type="match status" value="1"/>
</dbReference>
<dbReference type="Gene3D" id="3.90.226.10">
    <property type="entry name" value="2-enoyl-CoA Hydratase, Chain A, domain 1"/>
    <property type="match status" value="1"/>
</dbReference>
<dbReference type="Gene3D" id="3.40.50.720">
    <property type="entry name" value="NAD(P)-binding Rossmann-like Domain"/>
    <property type="match status" value="1"/>
</dbReference>
<dbReference type="HAMAP" id="MF_01621">
    <property type="entry name" value="FadB"/>
    <property type="match status" value="1"/>
</dbReference>
<dbReference type="InterPro" id="IPR006180">
    <property type="entry name" value="3-OHacyl-CoA_DH_CS"/>
</dbReference>
<dbReference type="InterPro" id="IPR006176">
    <property type="entry name" value="3-OHacyl-CoA_DH_NAD-bd"/>
</dbReference>
<dbReference type="InterPro" id="IPR006108">
    <property type="entry name" value="3HC_DH_C"/>
</dbReference>
<dbReference type="InterPro" id="IPR008927">
    <property type="entry name" value="6-PGluconate_DH-like_C_sf"/>
</dbReference>
<dbReference type="InterPro" id="IPR029045">
    <property type="entry name" value="ClpP/crotonase-like_dom_sf"/>
</dbReference>
<dbReference type="InterPro" id="IPR018376">
    <property type="entry name" value="Enoyl-CoA_hyd/isom_CS"/>
</dbReference>
<dbReference type="InterPro" id="IPR001753">
    <property type="entry name" value="Enoyl-CoA_hydra/iso"/>
</dbReference>
<dbReference type="InterPro" id="IPR050136">
    <property type="entry name" value="FA_oxidation_alpha_subunit"/>
</dbReference>
<dbReference type="InterPro" id="IPR012799">
    <property type="entry name" value="FadB"/>
</dbReference>
<dbReference type="InterPro" id="IPR036291">
    <property type="entry name" value="NAD(P)-bd_dom_sf"/>
</dbReference>
<dbReference type="NCBIfam" id="TIGR02437">
    <property type="entry name" value="FadB"/>
    <property type="match status" value="1"/>
</dbReference>
<dbReference type="NCBIfam" id="NF008727">
    <property type="entry name" value="PRK11730.1"/>
    <property type="match status" value="1"/>
</dbReference>
<dbReference type="PANTHER" id="PTHR43612">
    <property type="entry name" value="TRIFUNCTIONAL ENZYME SUBUNIT ALPHA"/>
    <property type="match status" value="1"/>
</dbReference>
<dbReference type="PANTHER" id="PTHR43612:SF3">
    <property type="entry name" value="TRIFUNCTIONAL ENZYME SUBUNIT ALPHA, MITOCHONDRIAL"/>
    <property type="match status" value="1"/>
</dbReference>
<dbReference type="Pfam" id="PF00725">
    <property type="entry name" value="3HCDH"/>
    <property type="match status" value="2"/>
</dbReference>
<dbReference type="Pfam" id="PF02737">
    <property type="entry name" value="3HCDH_N"/>
    <property type="match status" value="1"/>
</dbReference>
<dbReference type="Pfam" id="PF00378">
    <property type="entry name" value="ECH_1"/>
    <property type="match status" value="1"/>
</dbReference>
<dbReference type="SUPFAM" id="SSF48179">
    <property type="entry name" value="6-phosphogluconate dehydrogenase C-terminal domain-like"/>
    <property type="match status" value="2"/>
</dbReference>
<dbReference type="SUPFAM" id="SSF52096">
    <property type="entry name" value="ClpP/crotonase"/>
    <property type="match status" value="1"/>
</dbReference>
<dbReference type="SUPFAM" id="SSF51735">
    <property type="entry name" value="NAD(P)-binding Rossmann-fold domains"/>
    <property type="match status" value="1"/>
</dbReference>
<dbReference type="PROSITE" id="PS00067">
    <property type="entry name" value="3HCDH"/>
    <property type="match status" value="1"/>
</dbReference>
<dbReference type="PROSITE" id="PS00166">
    <property type="entry name" value="ENOYL_COA_HYDRATASE"/>
    <property type="match status" value="1"/>
</dbReference>
<comment type="function">
    <text evidence="1">Involved in the aerobic and anaerobic degradation of long-chain fatty acids via beta-oxidation cycle. Catalyzes the formation of 3-oxoacyl-CoA from enoyl-CoA via L-3-hydroxyacyl-CoA. It can also use D-3-hydroxyacyl-CoA and cis-3-enoyl-CoA as substrate.</text>
</comment>
<comment type="catalytic activity">
    <reaction evidence="1">
        <text>a (3S)-3-hydroxyacyl-CoA + NAD(+) = a 3-oxoacyl-CoA + NADH + H(+)</text>
        <dbReference type="Rhea" id="RHEA:22432"/>
        <dbReference type="ChEBI" id="CHEBI:15378"/>
        <dbReference type="ChEBI" id="CHEBI:57318"/>
        <dbReference type="ChEBI" id="CHEBI:57540"/>
        <dbReference type="ChEBI" id="CHEBI:57945"/>
        <dbReference type="ChEBI" id="CHEBI:90726"/>
        <dbReference type="EC" id="1.1.1.35"/>
    </reaction>
</comment>
<comment type="catalytic activity">
    <reaction evidence="1">
        <text>a (3S)-3-hydroxyacyl-CoA = a (2E)-enoyl-CoA + H2O</text>
        <dbReference type="Rhea" id="RHEA:16105"/>
        <dbReference type="ChEBI" id="CHEBI:15377"/>
        <dbReference type="ChEBI" id="CHEBI:57318"/>
        <dbReference type="ChEBI" id="CHEBI:58856"/>
        <dbReference type="EC" id="4.2.1.17"/>
    </reaction>
</comment>
<comment type="catalytic activity">
    <reaction evidence="1">
        <text>a 4-saturated-(3S)-3-hydroxyacyl-CoA = a (3E)-enoyl-CoA + H2O</text>
        <dbReference type="Rhea" id="RHEA:20724"/>
        <dbReference type="ChEBI" id="CHEBI:15377"/>
        <dbReference type="ChEBI" id="CHEBI:58521"/>
        <dbReference type="ChEBI" id="CHEBI:137480"/>
        <dbReference type="EC" id="4.2.1.17"/>
    </reaction>
</comment>
<comment type="catalytic activity">
    <reaction evidence="1">
        <text>(3S)-3-hydroxybutanoyl-CoA = (3R)-3-hydroxybutanoyl-CoA</text>
        <dbReference type="Rhea" id="RHEA:21760"/>
        <dbReference type="ChEBI" id="CHEBI:57315"/>
        <dbReference type="ChEBI" id="CHEBI:57316"/>
        <dbReference type="EC" id="5.1.2.3"/>
    </reaction>
</comment>
<comment type="catalytic activity">
    <reaction evidence="1">
        <text>a (3Z)-enoyl-CoA = a 4-saturated (2E)-enoyl-CoA</text>
        <dbReference type="Rhea" id="RHEA:45900"/>
        <dbReference type="ChEBI" id="CHEBI:85097"/>
        <dbReference type="ChEBI" id="CHEBI:85489"/>
        <dbReference type="EC" id="5.3.3.8"/>
    </reaction>
</comment>
<comment type="catalytic activity">
    <reaction evidence="1">
        <text>a (3E)-enoyl-CoA = a 4-saturated (2E)-enoyl-CoA</text>
        <dbReference type="Rhea" id="RHEA:45228"/>
        <dbReference type="ChEBI" id="CHEBI:58521"/>
        <dbReference type="ChEBI" id="CHEBI:85097"/>
        <dbReference type="EC" id="5.3.3.8"/>
    </reaction>
</comment>
<comment type="pathway">
    <text evidence="1">Lipid metabolism; fatty acid beta-oxidation.</text>
</comment>
<comment type="subunit">
    <text evidence="1">Heterotetramer of two alpha chains (FadB) and two beta chains (FadA).</text>
</comment>
<comment type="similarity">
    <text evidence="1">In the N-terminal section; belongs to the enoyl-CoA hydratase/isomerase family.</text>
</comment>
<comment type="similarity">
    <text evidence="1">In the C-terminal section; belongs to the 3-hydroxyacyl-CoA dehydrogenase family.</text>
</comment>
<proteinExistence type="inferred from homology"/>
<evidence type="ECO:0000255" key="1">
    <source>
        <dbReference type="HAMAP-Rule" id="MF_01621"/>
    </source>
</evidence>
<name>FADB_ALIFM</name>
<protein>
    <recommendedName>
        <fullName evidence="1">Fatty acid oxidation complex subunit alpha</fullName>
    </recommendedName>
    <domain>
        <recommendedName>
            <fullName evidence="1">Enoyl-CoA hydratase/Delta(3)-cis-Delta(2)-trans-enoyl-CoA isomerase/3-hydroxybutyryl-CoA epimerase</fullName>
            <ecNumber evidence="1">4.2.1.17</ecNumber>
            <ecNumber evidence="1">5.1.2.3</ecNumber>
            <ecNumber evidence="1">5.3.3.8</ecNumber>
        </recommendedName>
    </domain>
    <domain>
        <recommendedName>
            <fullName evidence="1">3-hydroxyacyl-CoA dehydrogenase</fullName>
            <ecNumber evidence="1">1.1.1.35</ecNumber>
        </recommendedName>
    </domain>
</protein>
<organism>
    <name type="scientific">Aliivibrio fischeri (strain MJ11)</name>
    <name type="common">Vibrio fischeri</name>
    <dbReference type="NCBI Taxonomy" id="388396"/>
    <lineage>
        <taxon>Bacteria</taxon>
        <taxon>Pseudomonadati</taxon>
        <taxon>Pseudomonadota</taxon>
        <taxon>Gammaproteobacteria</taxon>
        <taxon>Vibrionales</taxon>
        <taxon>Vibrionaceae</taxon>
        <taxon>Aliivibrio</taxon>
    </lineage>
</organism>